<feature type="initiator methionine" description="Removed" evidence="3">
    <location>
        <position position="1"/>
    </location>
</feature>
<feature type="chain" id="PRO_0000208628" description="F-actin-capping protein subunit alpha-2">
    <location>
        <begin position="2"/>
        <end position="286"/>
    </location>
</feature>
<feature type="modified residue" description="N-acetylalanine" evidence="3">
    <location>
        <position position="2"/>
    </location>
</feature>
<feature type="modified residue" description="Phosphoserine" evidence="2">
    <location>
        <position position="9"/>
    </location>
</feature>
<gene>
    <name type="primary">Capza2</name>
    <name type="synonym">Cappa2</name>
</gene>
<sequence>MADLEEQLSDEEKVRIAAKFIIHAPPGEFNEVFNDVRLLLNNDNLLREGAAHAFAQYNLDQFTPVKIEGYEDQVLITEHGDLGNGKFLDPKNRICFKFDHLRKEATDPRPYEAENAIESWRTSVETALRAYVKEHYPNGVCTVYGKKVDGQQTIIACIESHQFQAKNFWNGRWRSEWKFTVTPSTTQVVGILKIQVHYYEDGNVQLVSHKDIQDSLTVSNEVQTAKEFIKIVEAAENEYQTAISENYQTMSDTTFKALRRQLPVTRTKIDWNKILSYKIGKEMQNA</sequence>
<name>CAZA2_MOUSE</name>
<reference key="1">
    <citation type="journal article" date="1997" name="Cell Motil. Cytoskeleton">
        <title>Vertebrates have conserved capping protein alpha isoforms with specific expression patterns.</title>
        <authorList>
            <person name="Hart M.C."/>
            <person name="Korshunova Y.O."/>
            <person name="Cooper J.A."/>
        </authorList>
    </citation>
    <scope>NUCLEOTIDE SEQUENCE [MRNA]</scope>
    <source>
        <tissue>Muscle</tissue>
    </source>
</reference>
<reference key="2">
    <citation type="journal article" date="2004" name="Genome Res.">
        <title>The status, quality, and expansion of the NIH full-length cDNA project: the Mammalian Gene Collection (MGC).</title>
        <authorList>
            <consortium name="The MGC Project Team"/>
        </authorList>
    </citation>
    <scope>NUCLEOTIDE SEQUENCE [LARGE SCALE MRNA]</scope>
    <source>
        <strain>C57BL/6J</strain>
        <tissue>Brain</tissue>
    </source>
</reference>
<reference key="3">
    <citation type="submission" date="2008-03" db="UniProtKB">
        <authorList>
            <person name="Sumpton D.P."/>
            <person name="Sandilands E."/>
            <person name="Frame M.C."/>
            <person name="Bienvenut W.V."/>
        </authorList>
    </citation>
    <scope>PROTEIN SEQUENCE OF 2-13; 20-86 AND 104-129</scope>
    <scope>CLEAVAGE OF INITIATOR METHIONINE</scope>
    <scope>ACETYLATION AT ALA-2</scope>
    <scope>IDENTIFICATION BY MASS SPECTROMETRY</scope>
    <source>
        <tissue>Embryonic fibroblast</tissue>
    </source>
</reference>
<reference key="4">
    <citation type="submission" date="2007-03" db="UniProtKB">
        <authorList>
            <person name="Lubec G."/>
            <person name="Klug S."/>
        </authorList>
    </citation>
    <scope>PROTEIN SEQUENCE OF 20-37; 67-86 AND 194-210</scope>
    <scope>IDENTIFICATION BY MASS SPECTROMETRY</scope>
    <source>
        <tissue>Hippocampus</tissue>
    </source>
</reference>
<reference key="5">
    <citation type="journal article" date="2010" name="Cell">
        <title>A tissue-specific atlas of mouse protein phosphorylation and expression.</title>
        <authorList>
            <person name="Huttlin E.L."/>
            <person name="Jedrychowski M.P."/>
            <person name="Elias J.E."/>
            <person name="Goswami T."/>
            <person name="Rad R."/>
            <person name="Beausoleil S.A."/>
            <person name="Villen J."/>
            <person name="Haas W."/>
            <person name="Sowa M.E."/>
            <person name="Gygi S.P."/>
        </authorList>
    </citation>
    <scope>IDENTIFICATION BY MASS SPECTROMETRY [LARGE SCALE ANALYSIS]</scope>
    <source>
        <tissue>Brain</tissue>
        <tissue>Brown adipose tissue</tissue>
        <tissue>Heart</tissue>
        <tissue>Kidney</tissue>
        <tissue>Liver</tissue>
        <tissue>Lung</tissue>
        <tissue>Pancreas</tissue>
        <tissue>Spleen</tissue>
        <tissue>Testis</tissue>
    </source>
</reference>
<organism>
    <name type="scientific">Mus musculus</name>
    <name type="common">Mouse</name>
    <dbReference type="NCBI Taxonomy" id="10090"/>
    <lineage>
        <taxon>Eukaryota</taxon>
        <taxon>Metazoa</taxon>
        <taxon>Chordata</taxon>
        <taxon>Craniata</taxon>
        <taxon>Vertebrata</taxon>
        <taxon>Euteleostomi</taxon>
        <taxon>Mammalia</taxon>
        <taxon>Eutheria</taxon>
        <taxon>Euarchontoglires</taxon>
        <taxon>Glires</taxon>
        <taxon>Rodentia</taxon>
        <taxon>Myomorpha</taxon>
        <taxon>Muroidea</taxon>
        <taxon>Muridae</taxon>
        <taxon>Murinae</taxon>
        <taxon>Mus</taxon>
        <taxon>Mus</taxon>
    </lineage>
</organism>
<evidence type="ECO:0000250" key="1"/>
<evidence type="ECO:0000250" key="2">
    <source>
        <dbReference type="UniProtKB" id="P47755"/>
    </source>
</evidence>
<evidence type="ECO:0000269" key="3">
    <source ref="3"/>
</evidence>
<evidence type="ECO:0000305" key="4"/>
<protein>
    <recommendedName>
        <fullName>F-actin-capping protein subunit alpha-2</fullName>
    </recommendedName>
    <alternativeName>
        <fullName>CapZ alpha-2</fullName>
    </alternativeName>
</protein>
<proteinExistence type="evidence at protein level"/>
<keyword id="KW-0007">Acetylation</keyword>
<keyword id="KW-0117">Actin capping</keyword>
<keyword id="KW-0009">Actin-binding</keyword>
<keyword id="KW-0903">Direct protein sequencing</keyword>
<keyword id="KW-0597">Phosphoprotein</keyword>
<keyword id="KW-1185">Reference proteome</keyword>
<comment type="function">
    <text>F-actin-capping proteins bind in a Ca(2+)-independent manner to the fast growing ends of actin filaments (barbed end) thereby blocking the exchange of subunits at these ends. Unlike other capping proteins (such as gelsolin and severin), these proteins do not sever actin filaments.</text>
</comment>
<comment type="subunit">
    <text evidence="1 2">Component of the F-actin capping complex, composed of a heterodimer of an alpha and a beta subunit. Component of the WASH complex, composed of F-actin-capping protein subunit alpha (CAPZA1, CAPZA2 or CAPZA3), F-actin-capping protein subunit beta (CAPZB), WASHC1, WASHC2, WASHC3, WASHC4 and WASHC5. Interacts with RCSD1/CAPZIP (By similarity). Directly interacts with CRACD; this interaction decreases binding to actin (By similarity).</text>
</comment>
<comment type="similarity">
    <text evidence="4">Belongs to the F-actin-capping protein alpha subunit family.</text>
</comment>
<dbReference type="EMBL" id="U16741">
    <property type="protein sequence ID" value="AAC00567.1"/>
    <property type="molecule type" value="mRNA"/>
</dbReference>
<dbReference type="EMBL" id="BC082589">
    <property type="protein sequence ID" value="AAH82589.1"/>
    <property type="molecule type" value="mRNA"/>
</dbReference>
<dbReference type="CCDS" id="CCDS19926.1"/>
<dbReference type="RefSeq" id="NP_031630.1">
    <property type="nucleotide sequence ID" value="NM_007604.3"/>
</dbReference>
<dbReference type="SMR" id="P47754"/>
<dbReference type="BioGRID" id="198478">
    <property type="interactions" value="38"/>
</dbReference>
<dbReference type="DIP" id="DIP-31382N"/>
<dbReference type="FunCoup" id="P47754">
    <property type="interactions" value="2706"/>
</dbReference>
<dbReference type="IntAct" id="P47754">
    <property type="interactions" value="19"/>
</dbReference>
<dbReference type="MINT" id="P47754"/>
<dbReference type="STRING" id="10090.ENSMUSP00000015877"/>
<dbReference type="GlyGen" id="P47754">
    <property type="glycosylation" value="1 site, 1 O-linked glycan (1 site)"/>
</dbReference>
<dbReference type="iPTMnet" id="P47754"/>
<dbReference type="PhosphoSitePlus" id="P47754"/>
<dbReference type="SwissPalm" id="P47754"/>
<dbReference type="REPRODUCTION-2DPAGE" id="P47754"/>
<dbReference type="CPTAC" id="non-CPTAC-3771"/>
<dbReference type="jPOST" id="P47754"/>
<dbReference type="PaxDb" id="10090-ENSMUSP00000015877"/>
<dbReference type="PeptideAtlas" id="P47754"/>
<dbReference type="ProteomicsDB" id="265676"/>
<dbReference type="Pumba" id="P47754"/>
<dbReference type="Antibodypedia" id="2213">
    <property type="antibodies" value="198 antibodies from 26 providers"/>
</dbReference>
<dbReference type="DNASU" id="12343"/>
<dbReference type="Ensembl" id="ENSMUST00000015877.14">
    <property type="protein sequence ID" value="ENSMUSP00000015877.8"/>
    <property type="gene ID" value="ENSMUSG00000015733.14"/>
</dbReference>
<dbReference type="GeneID" id="12343"/>
<dbReference type="KEGG" id="mmu:12343"/>
<dbReference type="UCSC" id="uc009azs.1">
    <property type="organism name" value="mouse"/>
</dbReference>
<dbReference type="AGR" id="MGI:106222"/>
<dbReference type="CTD" id="830"/>
<dbReference type="MGI" id="MGI:106222">
    <property type="gene designation" value="Capza2"/>
</dbReference>
<dbReference type="VEuPathDB" id="HostDB:ENSMUSG00000015733"/>
<dbReference type="eggNOG" id="KOG0836">
    <property type="taxonomic scope" value="Eukaryota"/>
</dbReference>
<dbReference type="GeneTree" id="ENSGT00950000183119"/>
<dbReference type="HOGENOM" id="CLU_045161_0_0_1"/>
<dbReference type="InParanoid" id="P47754"/>
<dbReference type="OMA" id="VACIEDH"/>
<dbReference type="OrthoDB" id="340550at2759"/>
<dbReference type="PhylomeDB" id="P47754"/>
<dbReference type="TreeFam" id="TF314822"/>
<dbReference type="Reactome" id="R-MMU-2132295">
    <property type="pathway name" value="MHC class II antigen presentation"/>
</dbReference>
<dbReference type="Reactome" id="R-MMU-3371497">
    <property type="pathway name" value="HSP90 chaperone cycle for steroid hormone receptors (SHR) in the presence of ligand"/>
</dbReference>
<dbReference type="Reactome" id="R-MMU-6807878">
    <property type="pathway name" value="COPI-mediated anterograde transport"/>
</dbReference>
<dbReference type="Reactome" id="R-MMU-6811436">
    <property type="pathway name" value="COPI-independent Golgi-to-ER retrograde traffic"/>
</dbReference>
<dbReference type="Reactome" id="R-MMU-879415">
    <property type="pathway name" value="Advanced glycosylation endproduct receptor signaling"/>
</dbReference>
<dbReference type="Reactome" id="R-MMU-983231">
    <property type="pathway name" value="Factors involved in megakaryocyte development and platelet production"/>
</dbReference>
<dbReference type="BioGRID-ORCS" id="12343">
    <property type="hits" value="2 hits in 76 CRISPR screens"/>
</dbReference>
<dbReference type="CD-CODE" id="CE726F99">
    <property type="entry name" value="Postsynaptic density"/>
</dbReference>
<dbReference type="ChiTaRS" id="Capza2">
    <property type="organism name" value="mouse"/>
</dbReference>
<dbReference type="PRO" id="PR:P47754"/>
<dbReference type="Proteomes" id="UP000000589">
    <property type="component" value="Chromosome 6"/>
</dbReference>
<dbReference type="RNAct" id="P47754">
    <property type="molecule type" value="protein"/>
</dbReference>
<dbReference type="Bgee" id="ENSMUSG00000015733">
    <property type="expression patterns" value="Expressed in triceps brachii and 271 other cell types or tissues"/>
</dbReference>
<dbReference type="ExpressionAtlas" id="P47754">
    <property type="expression patterns" value="baseline and differential"/>
</dbReference>
<dbReference type="GO" id="GO:0005903">
    <property type="term" value="C:brush border"/>
    <property type="evidence" value="ECO:0000314"/>
    <property type="project" value="UniProtKB"/>
</dbReference>
<dbReference type="GO" id="GO:0030863">
    <property type="term" value="C:cortical cytoskeleton"/>
    <property type="evidence" value="ECO:0000314"/>
    <property type="project" value="MGI"/>
</dbReference>
<dbReference type="GO" id="GO:0005829">
    <property type="term" value="C:cytosol"/>
    <property type="evidence" value="ECO:0000304"/>
    <property type="project" value="Reactome"/>
</dbReference>
<dbReference type="GO" id="GO:0008290">
    <property type="term" value="C:F-actin capping protein complex"/>
    <property type="evidence" value="ECO:0000353"/>
    <property type="project" value="MGI"/>
</dbReference>
<dbReference type="GO" id="GO:0016020">
    <property type="term" value="C:membrane"/>
    <property type="evidence" value="ECO:0000314"/>
    <property type="project" value="MGI"/>
</dbReference>
<dbReference type="GO" id="GO:0003779">
    <property type="term" value="F:actin binding"/>
    <property type="evidence" value="ECO:0007669"/>
    <property type="project" value="UniProtKB-KW"/>
</dbReference>
<dbReference type="GO" id="GO:0051016">
    <property type="term" value="P:barbed-end actin filament capping"/>
    <property type="evidence" value="ECO:0007669"/>
    <property type="project" value="InterPro"/>
</dbReference>
<dbReference type="FunFam" id="3.30.1140.60:FF:000001">
    <property type="entry name" value="F-actin-capping protein subunit alpha"/>
    <property type="match status" value="1"/>
</dbReference>
<dbReference type="FunFam" id="3.90.1150.210:FF:000002">
    <property type="entry name" value="F-actin-capping protein subunit alpha"/>
    <property type="match status" value="1"/>
</dbReference>
<dbReference type="Gene3D" id="3.30.1140.60">
    <property type="entry name" value="F-actin capping protein, alpha subunit"/>
    <property type="match status" value="1"/>
</dbReference>
<dbReference type="Gene3D" id="3.90.1150.210">
    <property type="entry name" value="F-actin capping protein, beta subunit"/>
    <property type="match status" value="1"/>
</dbReference>
<dbReference type="InterPro" id="IPR002189">
    <property type="entry name" value="CapZ_alpha"/>
</dbReference>
<dbReference type="InterPro" id="IPR037282">
    <property type="entry name" value="CapZ_alpha/beta"/>
</dbReference>
<dbReference type="InterPro" id="IPR042276">
    <property type="entry name" value="CapZ_alpha/beta_2"/>
</dbReference>
<dbReference type="InterPro" id="IPR042489">
    <property type="entry name" value="CapZ_alpha_1"/>
</dbReference>
<dbReference type="InterPro" id="IPR017865">
    <property type="entry name" value="F-actin_cap_asu_CS"/>
</dbReference>
<dbReference type="PANTHER" id="PTHR10653">
    <property type="entry name" value="F-ACTIN-CAPPING PROTEIN SUBUNIT ALPHA"/>
    <property type="match status" value="1"/>
</dbReference>
<dbReference type="PANTHER" id="PTHR10653:SF2">
    <property type="entry name" value="F-ACTIN-CAPPING PROTEIN SUBUNIT ALPHA-2"/>
    <property type="match status" value="1"/>
</dbReference>
<dbReference type="Pfam" id="PF01267">
    <property type="entry name" value="F-actin_cap_A"/>
    <property type="match status" value="1"/>
</dbReference>
<dbReference type="PRINTS" id="PR00191">
    <property type="entry name" value="FACTINCAPA"/>
</dbReference>
<dbReference type="SUPFAM" id="SSF90096">
    <property type="entry name" value="Subunits of heterodimeric actin filament capping protein Capz"/>
    <property type="match status" value="1"/>
</dbReference>
<dbReference type="PROSITE" id="PS00748">
    <property type="entry name" value="F_ACTIN_CAPPING_A_1"/>
    <property type="match status" value="1"/>
</dbReference>
<dbReference type="PROSITE" id="PS00749">
    <property type="entry name" value="F_ACTIN_CAPPING_A_2"/>
    <property type="match status" value="1"/>
</dbReference>
<accession>P47754</accession>